<keyword id="KW-0028">Amino-acid biosynthesis</keyword>
<keyword id="KW-0057">Aromatic amino acid biosynthesis</keyword>
<keyword id="KW-0170">Cobalt</keyword>
<keyword id="KW-0963">Cytoplasm</keyword>
<keyword id="KW-0456">Lyase</keyword>
<keyword id="KW-0479">Metal-binding</keyword>
<keyword id="KW-0520">NAD</keyword>
<keyword id="KW-0547">Nucleotide-binding</keyword>
<keyword id="KW-0862">Zinc</keyword>
<evidence type="ECO:0000255" key="1">
    <source>
        <dbReference type="HAMAP-Rule" id="MF_00110"/>
    </source>
</evidence>
<organism>
    <name type="scientific">Geobacillus thermodenitrificans (strain NG80-2)</name>
    <dbReference type="NCBI Taxonomy" id="420246"/>
    <lineage>
        <taxon>Bacteria</taxon>
        <taxon>Bacillati</taxon>
        <taxon>Bacillota</taxon>
        <taxon>Bacilli</taxon>
        <taxon>Bacillales</taxon>
        <taxon>Anoxybacillaceae</taxon>
        <taxon>Geobacillus</taxon>
    </lineage>
</organism>
<reference key="1">
    <citation type="journal article" date="2007" name="Proc. Natl. Acad. Sci. U.S.A.">
        <title>Genome and proteome of long-chain alkane degrading Geobacillus thermodenitrificans NG80-2 isolated from a deep-subsurface oil reservoir.</title>
        <authorList>
            <person name="Feng L."/>
            <person name="Wang W."/>
            <person name="Cheng J."/>
            <person name="Ren Y."/>
            <person name="Zhao G."/>
            <person name="Gao C."/>
            <person name="Tang Y."/>
            <person name="Liu X."/>
            <person name="Han W."/>
            <person name="Peng X."/>
            <person name="Liu R."/>
            <person name="Wang L."/>
        </authorList>
    </citation>
    <scope>NUCLEOTIDE SEQUENCE [LARGE SCALE GENOMIC DNA]</scope>
    <source>
        <strain>NG80-2</strain>
    </source>
</reference>
<accession>A4IQ88</accession>
<proteinExistence type="inferred from homology"/>
<feature type="chain" id="PRO_1000094525" description="3-dehydroquinate synthase">
    <location>
        <begin position="1"/>
        <end position="366"/>
    </location>
</feature>
<feature type="binding site" evidence="1">
    <location>
        <begin position="74"/>
        <end position="79"/>
    </location>
    <ligand>
        <name>NAD(+)</name>
        <dbReference type="ChEBI" id="CHEBI:57540"/>
    </ligand>
</feature>
<feature type="binding site" evidence="1">
    <location>
        <begin position="108"/>
        <end position="112"/>
    </location>
    <ligand>
        <name>NAD(+)</name>
        <dbReference type="ChEBI" id="CHEBI:57540"/>
    </ligand>
</feature>
<feature type="binding site" evidence="1">
    <location>
        <begin position="132"/>
        <end position="133"/>
    </location>
    <ligand>
        <name>NAD(+)</name>
        <dbReference type="ChEBI" id="CHEBI:57540"/>
    </ligand>
</feature>
<feature type="binding site" evidence="1">
    <location>
        <position position="144"/>
    </location>
    <ligand>
        <name>NAD(+)</name>
        <dbReference type="ChEBI" id="CHEBI:57540"/>
    </ligand>
</feature>
<feature type="binding site" evidence="1">
    <location>
        <position position="153"/>
    </location>
    <ligand>
        <name>NAD(+)</name>
        <dbReference type="ChEBI" id="CHEBI:57540"/>
    </ligand>
</feature>
<feature type="binding site" evidence="1">
    <location>
        <begin position="171"/>
        <end position="174"/>
    </location>
    <ligand>
        <name>NAD(+)</name>
        <dbReference type="ChEBI" id="CHEBI:57540"/>
    </ligand>
</feature>
<feature type="binding site" evidence="1">
    <location>
        <position position="186"/>
    </location>
    <ligand>
        <name>Zn(2+)</name>
        <dbReference type="ChEBI" id="CHEBI:29105"/>
    </ligand>
</feature>
<feature type="binding site" evidence="1">
    <location>
        <position position="249"/>
    </location>
    <ligand>
        <name>Zn(2+)</name>
        <dbReference type="ChEBI" id="CHEBI:29105"/>
    </ligand>
</feature>
<feature type="binding site" evidence="1">
    <location>
        <position position="266"/>
    </location>
    <ligand>
        <name>Zn(2+)</name>
        <dbReference type="ChEBI" id="CHEBI:29105"/>
    </ligand>
</feature>
<dbReference type="EC" id="4.2.3.4" evidence="1"/>
<dbReference type="EMBL" id="CP000557">
    <property type="protein sequence ID" value="ABO67492.1"/>
    <property type="molecule type" value="Genomic_DNA"/>
</dbReference>
<dbReference type="RefSeq" id="WP_011887695.1">
    <property type="nucleotide sequence ID" value="NC_009328.1"/>
</dbReference>
<dbReference type="SMR" id="A4IQ88"/>
<dbReference type="KEGG" id="gtn:GTNG_2140"/>
<dbReference type="eggNOG" id="COG0337">
    <property type="taxonomic scope" value="Bacteria"/>
</dbReference>
<dbReference type="HOGENOM" id="CLU_001201_0_2_9"/>
<dbReference type="UniPathway" id="UPA00053">
    <property type="reaction ID" value="UER00085"/>
</dbReference>
<dbReference type="Proteomes" id="UP000001578">
    <property type="component" value="Chromosome"/>
</dbReference>
<dbReference type="GO" id="GO:0005737">
    <property type="term" value="C:cytoplasm"/>
    <property type="evidence" value="ECO:0007669"/>
    <property type="project" value="UniProtKB-SubCell"/>
</dbReference>
<dbReference type="GO" id="GO:0003856">
    <property type="term" value="F:3-dehydroquinate synthase activity"/>
    <property type="evidence" value="ECO:0007669"/>
    <property type="project" value="UniProtKB-UniRule"/>
</dbReference>
<dbReference type="GO" id="GO:0046872">
    <property type="term" value="F:metal ion binding"/>
    <property type="evidence" value="ECO:0007669"/>
    <property type="project" value="UniProtKB-KW"/>
</dbReference>
<dbReference type="GO" id="GO:0000166">
    <property type="term" value="F:nucleotide binding"/>
    <property type="evidence" value="ECO:0007669"/>
    <property type="project" value="UniProtKB-KW"/>
</dbReference>
<dbReference type="GO" id="GO:0008652">
    <property type="term" value="P:amino acid biosynthetic process"/>
    <property type="evidence" value="ECO:0007669"/>
    <property type="project" value="UniProtKB-KW"/>
</dbReference>
<dbReference type="GO" id="GO:0009073">
    <property type="term" value="P:aromatic amino acid family biosynthetic process"/>
    <property type="evidence" value="ECO:0007669"/>
    <property type="project" value="UniProtKB-KW"/>
</dbReference>
<dbReference type="GO" id="GO:0009423">
    <property type="term" value="P:chorismate biosynthetic process"/>
    <property type="evidence" value="ECO:0007669"/>
    <property type="project" value="UniProtKB-UniRule"/>
</dbReference>
<dbReference type="CDD" id="cd08195">
    <property type="entry name" value="DHQS"/>
    <property type="match status" value="1"/>
</dbReference>
<dbReference type="FunFam" id="3.40.50.1970:FF:000001">
    <property type="entry name" value="3-dehydroquinate synthase"/>
    <property type="match status" value="1"/>
</dbReference>
<dbReference type="Gene3D" id="3.40.50.1970">
    <property type="match status" value="1"/>
</dbReference>
<dbReference type="Gene3D" id="1.20.1090.10">
    <property type="entry name" value="Dehydroquinate synthase-like - alpha domain"/>
    <property type="match status" value="1"/>
</dbReference>
<dbReference type="HAMAP" id="MF_00110">
    <property type="entry name" value="DHQ_synthase"/>
    <property type="match status" value="1"/>
</dbReference>
<dbReference type="InterPro" id="IPR050071">
    <property type="entry name" value="Dehydroquinate_synthase"/>
</dbReference>
<dbReference type="InterPro" id="IPR016037">
    <property type="entry name" value="DHQ_synth_AroB"/>
</dbReference>
<dbReference type="InterPro" id="IPR030963">
    <property type="entry name" value="DHQ_synth_fam"/>
</dbReference>
<dbReference type="InterPro" id="IPR030960">
    <property type="entry name" value="DHQS/DOIS_N"/>
</dbReference>
<dbReference type="InterPro" id="IPR056179">
    <property type="entry name" value="DHQS_C"/>
</dbReference>
<dbReference type="NCBIfam" id="TIGR01357">
    <property type="entry name" value="aroB"/>
    <property type="match status" value="1"/>
</dbReference>
<dbReference type="PANTHER" id="PTHR43622">
    <property type="entry name" value="3-DEHYDROQUINATE SYNTHASE"/>
    <property type="match status" value="1"/>
</dbReference>
<dbReference type="PANTHER" id="PTHR43622:SF7">
    <property type="entry name" value="3-DEHYDROQUINATE SYNTHASE, CHLOROPLASTIC"/>
    <property type="match status" value="1"/>
</dbReference>
<dbReference type="Pfam" id="PF01761">
    <property type="entry name" value="DHQ_synthase"/>
    <property type="match status" value="1"/>
</dbReference>
<dbReference type="Pfam" id="PF24621">
    <property type="entry name" value="DHQS_C"/>
    <property type="match status" value="1"/>
</dbReference>
<dbReference type="PIRSF" id="PIRSF001455">
    <property type="entry name" value="DHQ_synth"/>
    <property type="match status" value="1"/>
</dbReference>
<dbReference type="SUPFAM" id="SSF56796">
    <property type="entry name" value="Dehydroquinate synthase-like"/>
    <property type="match status" value="1"/>
</dbReference>
<sequence length="366" mass="40512">MMERTIETATKQYPLLLGDGAARALPRLLRSLACPPGTKLFIITDDAVAPLYLDEVRAMLAAAEYDVYAYIIPSGEAAKSFDNYYACQTAALQCSLDRRSVIIALGGGVVGDLAGFVAATYMRGIRYIQMPTTLLAHDSAVGGKVAINHPLGKNMIGAFHQPEAVVYDTTFLRTLPERELRSGFAEVIKHALIRDRRFYEWLRAEVKTLADLRGEALTYCIEKGIDIKASIVREDEKETSVRAHLNFGHTLGHALESELGYGTLTHGEAVAIGMLFAVFVSERLYGHSFAEHRFAEWFARYGFPVSLPTTVEADRLLEKMKGDKKAYAGTVRMVLLREIGDVEVVELEDDKLLAWLDEFAKQGGGR</sequence>
<protein>
    <recommendedName>
        <fullName evidence="1">3-dehydroquinate synthase</fullName>
        <shortName evidence="1">DHQS</shortName>
        <ecNumber evidence="1">4.2.3.4</ecNumber>
    </recommendedName>
</protein>
<comment type="function">
    <text evidence="1">Catalyzes the conversion of 3-deoxy-D-arabino-heptulosonate 7-phosphate (DAHP) to dehydroquinate (DHQ).</text>
</comment>
<comment type="catalytic activity">
    <reaction evidence="1">
        <text>7-phospho-2-dehydro-3-deoxy-D-arabino-heptonate = 3-dehydroquinate + phosphate</text>
        <dbReference type="Rhea" id="RHEA:21968"/>
        <dbReference type="ChEBI" id="CHEBI:32364"/>
        <dbReference type="ChEBI" id="CHEBI:43474"/>
        <dbReference type="ChEBI" id="CHEBI:58394"/>
        <dbReference type="EC" id="4.2.3.4"/>
    </reaction>
</comment>
<comment type="cofactor">
    <cofactor evidence="1">
        <name>Co(2+)</name>
        <dbReference type="ChEBI" id="CHEBI:48828"/>
    </cofactor>
    <cofactor evidence="1">
        <name>Zn(2+)</name>
        <dbReference type="ChEBI" id="CHEBI:29105"/>
    </cofactor>
    <text evidence="1">Binds 1 divalent metal cation per subunit. Can use either Co(2+) or Zn(2+).</text>
</comment>
<comment type="cofactor">
    <cofactor evidence="1">
        <name>NAD(+)</name>
        <dbReference type="ChEBI" id="CHEBI:57540"/>
    </cofactor>
</comment>
<comment type="pathway">
    <text evidence="1">Metabolic intermediate biosynthesis; chorismate biosynthesis; chorismate from D-erythrose 4-phosphate and phosphoenolpyruvate: step 2/7.</text>
</comment>
<comment type="subcellular location">
    <subcellularLocation>
        <location evidence="1">Cytoplasm</location>
    </subcellularLocation>
</comment>
<comment type="similarity">
    <text evidence="1">Belongs to the sugar phosphate cyclases superfamily. Dehydroquinate synthase family.</text>
</comment>
<name>AROB_GEOTN</name>
<gene>
    <name evidence="1" type="primary">aroB</name>
    <name type="ordered locus">GTNG_2140</name>
</gene>